<organism>
    <name type="scientific">Oceanobacillus iheyensis (strain DSM 14371 / CIP 107618 / JCM 11309 / KCTC 3954 / HTE831)</name>
    <dbReference type="NCBI Taxonomy" id="221109"/>
    <lineage>
        <taxon>Bacteria</taxon>
        <taxon>Bacillati</taxon>
        <taxon>Bacillota</taxon>
        <taxon>Bacilli</taxon>
        <taxon>Bacillales</taxon>
        <taxon>Bacillaceae</taxon>
        <taxon>Oceanobacillus</taxon>
    </lineage>
</organism>
<protein>
    <recommendedName>
        <fullName evidence="1">UPF0229 protein OB2647</fullName>
    </recommendedName>
</protein>
<sequence length="390" mass="45077">MPEEHEHNFVVSQENWSLHRKGYQDQQRHSDKVKDAIKNNLPDLVSEENIIMSNGRDVVKIPIRSLDEYKIRYNYEKSKHVGQGDGESEVGDVVARDPNASQQGQQGQGNGKKAGDQPGTDFYESEVSIAEIEEALFQELELPNLKQKDEVEITTEKIEFNDVRKKGLMGNVDKKRTILTALKRNAREGKAQITPIYNDDLRFKTWNEIIKRDSKAVVIAMMDTSASMGTFEKYMARSFFFWMNRFLRTKYDTVEFEFIAHHTEAKVVSEEDFFSKGESGGTICSSAYHKALEVIDEKFNPRSYNIYPFHFSDGENISSDNATCIDLVHEIMEKSNMFGYGEVNGYNRYSTLMNAYKNIEDPKFKHYILKEKADVYHAMKSFFHKQPEKV</sequence>
<comment type="similarity">
    <text evidence="1">Belongs to the UPF0229 family.</text>
</comment>
<gene>
    <name type="ordered locus">OB2647</name>
</gene>
<accession>P59350</accession>
<dbReference type="EMBL" id="BA000028">
    <property type="protein sequence ID" value="BAC14603.1"/>
    <property type="molecule type" value="Genomic_DNA"/>
</dbReference>
<dbReference type="RefSeq" id="WP_011067041.1">
    <property type="nucleotide sequence ID" value="NC_004193.1"/>
</dbReference>
<dbReference type="STRING" id="221109.gene:10734899"/>
<dbReference type="KEGG" id="oih:OB2647"/>
<dbReference type="eggNOG" id="COG2718">
    <property type="taxonomic scope" value="Bacteria"/>
</dbReference>
<dbReference type="HOGENOM" id="CLU_049702_2_0_9"/>
<dbReference type="OrthoDB" id="9788289at2"/>
<dbReference type="PhylomeDB" id="P59350"/>
<dbReference type="Proteomes" id="UP000000822">
    <property type="component" value="Chromosome"/>
</dbReference>
<dbReference type="HAMAP" id="MF_01232">
    <property type="entry name" value="UPF0229"/>
    <property type="match status" value="1"/>
</dbReference>
<dbReference type="InterPro" id="IPR014230">
    <property type="entry name" value="Spore_YhbH"/>
</dbReference>
<dbReference type="InterPro" id="IPR006698">
    <property type="entry name" value="UPF0229"/>
</dbReference>
<dbReference type="NCBIfam" id="TIGR02877">
    <property type="entry name" value="spore_yhbH"/>
    <property type="match status" value="1"/>
</dbReference>
<dbReference type="PANTHER" id="PTHR30510">
    <property type="entry name" value="UPF0229 PROTEIN YEAH"/>
    <property type="match status" value="1"/>
</dbReference>
<dbReference type="PANTHER" id="PTHR30510:SF2">
    <property type="entry name" value="UPF0229 PROTEIN YEAH"/>
    <property type="match status" value="1"/>
</dbReference>
<dbReference type="Pfam" id="PF04285">
    <property type="entry name" value="DUF444"/>
    <property type="match status" value="2"/>
</dbReference>
<keyword id="KW-1185">Reference proteome</keyword>
<evidence type="ECO:0000255" key="1">
    <source>
        <dbReference type="HAMAP-Rule" id="MF_01232"/>
    </source>
</evidence>
<evidence type="ECO:0000256" key="2">
    <source>
        <dbReference type="SAM" id="MobiDB-lite"/>
    </source>
</evidence>
<name>Y2647_OCEIH</name>
<proteinExistence type="inferred from homology"/>
<feature type="chain" id="PRO_0000068198" description="UPF0229 protein OB2647">
    <location>
        <begin position="1"/>
        <end position="390"/>
    </location>
</feature>
<feature type="region of interest" description="Disordered" evidence="2">
    <location>
        <begin position="99"/>
        <end position="121"/>
    </location>
</feature>
<reference key="1">
    <citation type="journal article" date="2002" name="Nucleic Acids Res.">
        <title>Genome sequence of Oceanobacillus iheyensis isolated from the Iheya Ridge and its unexpected adaptive capabilities to extreme environments.</title>
        <authorList>
            <person name="Takami H."/>
            <person name="Takaki Y."/>
            <person name="Uchiyama I."/>
        </authorList>
    </citation>
    <scope>NUCLEOTIDE SEQUENCE [LARGE SCALE GENOMIC DNA]</scope>
    <source>
        <strain>DSM 14371 / CIP 107618 / JCM 11309 / KCTC 3954 / HTE831</strain>
    </source>
</reference>